<sequence length="121" mass="13463">MLRNTEYKQVIIVRTDIKMSKGKLAVQVAHAAVSAAFEAYKKKREWFLEWWATGQKKIVVKGGSERDLLKYAEMAKKKDLPVAIIRDAGLTELPPNTLTAVGIGPGPSRKIDEITGDLKLL</sequence>
<accession>A3DMF7</accession>
<proteinExistence type="inferred from homology"/>
<name>PTH_STAMF</name>
<dbReference type="EC" id="3.1.1.29" evidence="1"/>
<dbReference type="EMBL" id="CP000575">
    <property type="protein sequence ID" value="ABN69817.1"/>
    <property type="molecule type" value="Genomic_DNA"/>
</dbReference>
<dbReference type="RefSeq" id="WP_011839008.1">
    <property type="nucleotide sequence ID" value="NC_009033.1"/>
</dbReference>
<dbReference type="SMR" id="A3DMF7"/>
<dbReference type="STRING" id="399550.Smar_0714"/>
<dbReference type="GeneID" id="4907998"/>
<dbReference type="KEGG" id="smr:Smar_0714"/>
<dbReference type="eggNOG" id="arCOG04228">
    <property type="taxonomic scope" value="Archaea"/>
</dbReference>
<dbReference type="HOGENOM" id="CLU_073661_2_2_2"/>
<dbReference type="OrthoDB" id="6075at2157"/>
<dbReference type="Proteomes" id="UP000000254">
    <property type="component" value="Chromosome"/>
</dbReference>
<dbReference type="GO" id="GO:0005829">
    <property type="term" value="C:cytosol"/>
    <property type="evidence" value="ECO:0007669"/>
    <property type="project" value="TreeGrafter"/>
</dbReference>
<dbReference type="GO" id="GO:0004045">
    <property type="term" value="F:peptidyl-tRNA hydrolase activity"/>
    <property type="evidence" value="ECO:0007669"/>
    <property type="project" value="UniProtKB-UniRule"/>
</dbReference>
<dbReference type="GO" id="GO:0006412">
    <property type="term" value="P:translation"/>
    <property type="evidence" value="ECO:0007669"/>
    <property type="project" value="UniProtKB-UniRule"/>
</dbReference>
<dbReference type="CDD" id="cd02430">
    <property type="entry name" value="PTH2"/>
    <property type="match status" value="1"/>
</dbReference>
<dbReference type="FunFam" id="3.40.1490.10:FF:000001">
    <property type="entry name" value="Peptidyl-tRNA hydrolase 2"/>
    <property type="match status" value="1"/>
</dbReference>
<dbReference type="Gene3D" id="3.40.1490.10">
    <property type="entry name" value="Bit1"/>
    <property type="match status" value="1"/>
</dbReference>
<dbReference type="HAMAP" id="MF_00628">
    <property type="entry name" value="Pept_tRNA_hydro_arch"/>
    <property type="match status" value="1"/>
</dbReference>
<dbReference type="InterPro" id="IPR023476">
    <property type="entry name" value="Pep_tRNA_hydro_II_dom_sf"/>
</dbReference>
<dbReference type="InterPro" id="IPR034759">
    <property type="entry name" value="Pept_tRNA_hydro_arch"/>
</dbReference>
<dbReference type="InterPro" id="IPR002833">
    <property type="entry name" value="PTH2"/>
</dbReference>
<dbReference type="NCBIfam" id="TIGR00283">
    <property type="entry name" value="arch_pth2"/>
    <property type="match status" value="1"/>
</dbReference>
<dbReference type="NCBIfam" id="NF003314">
    <property type="entry name" value="PRK04322.1"/>
    <property type="match status" value="1"/>
</dbReference>
<dbReference type="PANTHER" id="PTHR12649">
    <property type="entry name" value="PEPTIDYL-TRNA HYDROLASE 2"/>
    <property type="match status" value="1"/>
</dbReference>
<dbReference type="PANTHER" id="PTHR12649:SF11">
    <property type="entry name" value="PEPTIDYL-TRNA HYDROLASE 2, MITOCHONDRIAL"/>
    <property type="match status" value="1"/>
</dbReference>
<dbReference type="Pfam" id="PF01981">
    <property type="entry name" value="PTH2"/>
    <property type="match status" value="1"/>
</dbReference>
<dbReference type="SUPFAM" id="SSF102462">
    <property type="entry name" value="Peptidyl-tRNA hydrolase II"/>
    <property type="match status" value="1"/>
</dbReference>
<comment type="function">
    <text evidence="1">The natural substrate for this enzyme may be peptidyl-tRNAs which drop off the ribosome during protein synthesis.</text>
</comment>
<comment type="catalytic activity">
    <reaction evidence="1">
        <text>an N-acyl-L-alpha-aminoacyl-tRNA + H2O = an N-acyl-L-amino acid + a tRNA + H(+)</text>
        <dbReference type="Rhea" id="RHEA:54448"/>
        <dbReference type="Rhea" id="RHEA-COMP:10123"/>
        <dbReference type="Rhea" id="RHEA-COMP:13883"/>
        <dbReference type="ChEBI" id="CHEBI:15377"/>
        <dbReference type="ChEBI" id="CHEBI:15378"/>
        <dbReference type="ChEBI" id="CHEBI:59874"/>
        <dbReference type="ChEBI" id="CHEBI:78442"/>
        <dbReference type="ChEBI" id="CHEBI:138191"/>
        <dbReference type="EC" id="3.1.1.29"/>
    </reaction>
</comment>
<comment type="subcellular location">
    <subcellularLocation>
        <location evidence="1">Cytoplasm</location>
    </subcellularLocation>
</comment>
<comment type="similarity">
    <text evidence="1">Belongs to the PTH2 family.</text>
</comment>
<keyword id="KW-0963">Cytoplasm</keyword>
<keyword id="KW-0378">Hydrolase</keyword>
<keyword id="KW-1185">Reference proteome</keyword>
<evidence type="ECO:0000255" key="1">
    <source>
        <dbReference type="HAMAP-Rule" id="MF_00628"/>
    </source>
</evidence>
<protein>
    <recommendedName>
        <fullName evidence="1">Peptidyl-tRNA hydrolase</fullName>
        <shortName evidence="1">PTH</shortName>
        <ecNumber evidence="1">3.1.1.29</ecNumber>
    </recommendedName>
</protein>
<feature type="chain" id="PRO_1000051681" description="Peptidyl-tRNA hydrolase">
    <location>
        <begin position="1"/>
        <end position="121"/>
    </location>
</feature>
<reference key="1">
    <citation type="journal article" date="2009" name="BMC Genomics">
        <title>The complete genome sequence of Staphylothermus marinus reveals differences in sulfur metabolism among heterotrophic Crenarchaeota.</title>
        <authorList>
            <person name="Anderson I.J."/>
            <person name="Dharmarajan L."/>
            <person name="Rodriguez J."/>
            <person name="Hooper S."/>
            <person name="Porat I."/>
            <person name="Ulrich L.E."/>
            <person name="Elkins J.G."/>
            <person name="Mavromatis K."/>
            <person name="Sun H."/>
            <person name="Land M."/>
            <person name="Lapidus A."/>
            <person name="Lucas S."/>
            <person name="Barry K."/>
            <person name="Huber H."/>
            <person name="Zhulin I.B."/>
            <person name="Whitman W.B."/>
            <person name="Mukhopadhyay B."/>
            <person name="Woese C."/>
            <person name="Bristow J."/>
            <person name="Kyrpides N."/>
        </authorList>
    </citation>
    <scope>NUCLEOTIDE SEQUENCE [LARGE SCALE GENOMIC DNA]</scope>
    <source>
        <strain>ATCC 43588 / DSM 3639 / JCM 9404 / F1</strain>
    </source>
</reference>
<reference key="2">
    <citation type="journal article" date="2009" name="Stand. Genomic Sci.">
        <title>Complete genome sequence of Staphylothermus marinus Stetter and Fiala 1986 type strain F1.</title>
        <authorList>
            <person name="Anderson I.J."/>
            <person name="Sun H."/>
            <person name="Lapidus A."/>
            <person name="Copeland A."/>
            <person name="Glavina Del Rio T."/>
            <person name="Tice H."/>
            <person name="Dalin E."/>
            <person name="Lucas S."/>
            <person name="Barry K."/>
            <person name="Land M."/>
            <person name="Richardson P."/>
            <person name="Huber H."/>
            <person name="Kyrpides N.C."/>
        </authorList>
    </citation>
    <scope>NUCLEOTIDE SEQUENCE [LARGE SCALE GENOMIC DNA]</scope>
    <source>
        <strain>ATCC 43588 / DSM 3639 / JCM 9404 / F1</strain>
    </source>
</reference>
<gene>
    <name evidence="1" type="primary">pth</name>
    <name type="ordered locus">Smar_0714</name>
</gene>
<organism>
    <name type="scientific">Staphylothermus marinus (strain ATCC 43588 / DSM 3639 / JCM 9404 / F1)</name>
    <dbReference type="NCBI Taxonomy" id="399550"/>
    <lineage>
        <taxon>Archaea</taxon>
        <taxon>Thermoproteota</taxon>
        <taxon>Thermoprotei</taxon>
        <taxon>Desulfurococcales</taxon>
        <taxon>Desulfurococcaceae</taxon>
        <taxon>Staphylothermus</taxon>
    </lineage>
</organism>